<organism>
    <name type="scientific">Bacillus cereus (strain ATCC 10987 / NRS 248)</name>
    <dbReference type="NCBI Taxonomy" id="222523"/>
    <lineage>
        <taxon>Bacteria</taxon>
        <taxon>Bacillati</taxon>
        <taxon>Bacillota</taxon>
        <taxon>Bacilli</taxon>
        <taxon>Bacillales</taxon>
        <taxon>Bacillaceae</taxon>
        <taxon>Bacillus</taxon>
        <taxon>Bacillus cereus group</taxon>
    </lineage>
</organism>
<evidence type="ECO:0000255" key="1">
    <source>
        <dbReference type="HAMAP-Rule" id="MF_00022"/>
    </source>
</evidence>
<proteinExistence type="inferred from homology"/>
<accession>Q73FB9</accession>
<name>SYE_BACC1</name>
<keyword id="KW-0030">Aminoacyl-tRNA synthetase</keyword>
<keyword id="KW-0067">ATP-binding</keyword>
<keyword id="KW-0963">Cytoplasm</keyword>
<keyword id="KW-0436">Ligase</keyword>
<keyword id="KW-0547">Nucleotide-binding</keyword>
<keyword id="KW-0648">Protein biosynthesis</keyword>
<gene>
    <name evidence="1" type="primary">gltX</name>
    <name type="ordered locus">BCE_0087</name>
</gene>
<feature type="chain" id="PRO_0000119499" description="Glutamate--tRNA ligase">
    <location>
        <begin position="1"/>
        <end position="485"/>
    </location>
</feature>
<feature type="short sequence motif" description="'HIGH' region" evidence="1">
    <location>
        <begin position="11"/>
        <end position="21"/>
    </location>
</feature>
<feature type="short sequence motif" description="'KMSKS' region" evidence="1">
    <location>
        <begin position="252"/>
        <end position="256"/>
    </location>
</feature>
<feature type="binding site" evidence="1">
    <location>
        <position position="255"/>
    </location>
    <ligand>
        <name>ATP</name>
        <dbReference type="ChEBI" id="CHEBI:30616"/>
    </ligand>
</feature>
<reference key="1">
    <citation type="journal article" date="2004" name="Nucleic Acids Res.">
        <title>The genome sequence of Bacillus cereus ATCC 10987 reveals metabolic adaptations and a large plasmid related to Bacillus anthracis pXO1.</title>
        <authorList>
            <person name="Rasko D.A."/>
            <person name="Ravel J."/>
            <person name="Oekstad O.A."/>
            <person name="Helgason E."/>
            <person name="Cer R.Z."/>
            <person name="Jiang L."/>
            <person name="Shores K.A."/>
            <person name="Fouts D.E."/>
            <person name="Tourasse N.J."/>
            <person name="Angiuoli S.V."/>
            <person name="Kolonay J.F."/>
            <person name="Nelson W.C."/>
            <person name="Kolstoe A.-B."/>
            <person name="Fraser C.M."/>
            <person name="Read T.D."/>
        </authorList>
    </citation>
    <scope>NUCLEOTIDE SEQUENCE [LARGE SCALE GENOMIC DNA]</scope>
    <source>
        <strain>ATCC 10987 / NRS 248</strain>
    </source>
</reference>
<protein>
    <recommendedName>
        <fullName evidence="1">Glutamate--tRNA ligase</fullName>
        <ecNumber evidence="1">6.1.1.17</ecNumber>
    </recommendedName>
    <alternativeName>
        <fullName evidence="1">Glutamyl-tRNA synthetase</fullName>
        <shortName evidence="1">GluRS</shortName>
    </alternativeName>
</protein>
<sequence>MEKQVRVRYAPSPTGHLHIGNARTALFNYLFARHQDGKFIIRIEDTDVKRNVAGGEESQLKYLKWLGMDWDEGVDVGGEFGPYRQTERLDIYKKLYEDLLERGLAYKCYMTEEELEAEREGQIARGETPRYAGNHRDLTEAQVKEFEAEGRIPSIRFRVPADRDYTFKDIVKDEVAFHSNDFGDFVIVKKDGIPTYNFAVAVDDHLMEITHVLRGDDHISNTPKQMMIYEAFGWDIPQFGHMTLIVNESRKKLSKRDESIIQFIEQYKELGYLPEAIFNFIALLGWSPVGEEEIFSQEEFIKMFDAARLSKSPALFDSQKLKWMNNQYMKKQDLDTVVELSLPHLVKAGRIGETLSEQEQAWIRDVIALYHEQMSFGAEIVELSEMFFKDHVDYEEEGQEVLKGEQVPEVLRAFAGQVEALEAMEPAAIKAAIKAVQKETGHKGKNLFMPIRVATTGQTHGPELPNAIALLGKEKVLXRLQKVIG</sequence>
<comment type="function">
    <text evidence="1">Catalyzes the attachment of glutamate to tRNA(Glu) in a two-step reaction: glutamate is first activated by ATP to form Glu-AMP and then transferred to the acceptor end of tRNA(Glu).</text>
</comment>
<comment type="catalytic activity">
    <reaction evidence="1">
        <text>tRNA(Glu) + L-glutamate + ATP = L-glutamyl-tRNA(Glu) + AMP + diphosphate</text>
        <dbReference type="Rhea" id="RHEA:23540"/>
        <dbReference type="Rhea" id="RHEA-COMP:9663"/>
        <dbReference type="Rhea" id="RHEA-COMP:9680"/>
        <dbReference type="ChEBI" id="CHEBI:29985"/>
        <dbReference type="ChEBI" id="CHEBI:30616"/>
        <dbReference type="ChEBI" id="CHEBI:33019"/>
        <dbReference type="ChEBI" id="CHEBI:78442"/>
        <dbReference type="ChEBI" id="CHEBI:78520"/>
        <dbReference type="ChEBI" id="CHEBI:456215"/>
        <dbReference type="EC" id="6.1.1.17"/>
    </reaction>
</comment>
<comment type="subunit">
    <text evidence="1">Monomer.</text>
</comment>
<comment type="subcellular location">
    <subcellularLocation>
        <location evidence="1">Cytoplasm</location>
    </subcellularLocation>
</comment>
<comment type="similarity">
    <text evidence="1">Belongs to the class-I aminoacyl-tRNA synthetase family. Glutamate--tRNA ligase type 1 subfamily.</text>
</comment>
<dbReference type="EC" id="6.1.1.17" evidence="1"/>
<dbReference type="EMBL" id="AE017194">
    <property type="protein sequence ID" value="AAS39023.1"/>
    <property type="molecule type" value="Genomic_DNA"/>
</dbReference>
<dbReference type="KEGG" id="bca:BCE_0087"/>
<dbReference type="HOGENOM" id="CLU_015768_6_1_9"/>
<dbReference type="Proteomes" id="UP000002527">
    <property type="component" value="Chromosome"/>
</dbReference>
<dbReference type="GO" id="GO:0005829">
    <property type="term" value="C:cytosol"/>
    <property type="evidence" value="ECO:0007669"/>
    <property type="project" value="TreeGrafter"/>
</dbReference>
<dbReference type="GO" id="GO:0005524">
    <property type="term" value="F:ATP binding"/>
    <property type="evidence" value="ECO:0007669"/>
    <property type="project" value="UniProtKB-UniRule"/>
</dbReference>
<dbReference type="GO" id="GO:0004818">
    <property type="term" value="F:glutamate-tRNA ligase activity"/>
    <property type="evidence" value="ECO:0007669"/>
    <property type="project" value="UniProtKB-UniRule"/>
</dbReference>
<dbReference type="GO" id="GO:0000049">
    <property type="term" value="F:tRNA binding"/>
    <property type="evidence" value="ECO:0007669"/>
    <property type="project" value="InterPro"/>
</dbReference>
<dbReference type="GO" id="GO:0008270">
    <property type="term" value="F:zinc ion binding"/>
    <property type="evidence" value="ECO:0007669"/>
    <property type="project" value="InterPro"/>
</dbReference>
<dbReference type="GO" id="GO:0006424">
    <property type="term" value="P:glutamyl-tRNA aminoacylation"/>
    <property type="evidence" value="ECO:0007669"/>
    <property type="project" value="UniProtKB-UniRule"/>
</dbReference>
<dbReference type="CDD" id="cd00808">
    <property type="entry name" value="GluRS_core"/>
    <property type="match status" value="1"/>
</dbReference>
<dbReference type="FunFam" id="1.10.10.350:FF:000002">
    <property type="entry name" value="Glutamate--tRNA ligase"/>
    <property type="match status" value="1"/>
</dbReference>
<dbReference type="FunFam" id="3.40.50.620:FF:000007">
    <property type="entry name" value="Glutamate--tRNA ligase"/>
    <property type="match status" value="1"/>
</dbReference>
<dbReference type="Gene3D" id="1.10.10.350">
    <property type="match status" value="1"/>
</dbReference>
<dbReference type="Gene3D" id="3.40.50.620">
    <property type="entry name" value="HUPs"/>
    <property type="match status" value="1"/>
</dbReference>
<dbReference type="HAMAP" id="MF_00022">
    <property type="entry name" value="Glu_tRNA_synth_type1"/>
    <property type="match status" value="1"/>
</dbReference>
<dbReference type="InterPro" id="IPR045462">
    <property type="entry name" value="aa-tRNA-synth_I_cd-bd"/>
</dbReference>
<dbReference type="InterPro" id="IPR020751">
    <property type="entry name" value="aa-tRNA-synth_I_codon-bd_sub2"/>
</dbReference>
<dbReference type="InterPro" id="IPR001412">
    <property type="entry name" value="aa-tRNA-synth_I_CS"/>
</dbReference>
<dbReference type="InterPro" id="IPR008925">
    <property type="entry name" value="aa_tRNA-synth_I_cd-bd_sf"/>
</dbReference>
<dbReference type="InterPro" id="IPR004527">
    <property type="entry name" value="Glu-tRNA-ligase_bac/mito"/>
</dbReference>
<dbReference type="InterPro" id="IPR000924">
    <property type="entry name" value="Glu/Gln-tRNA-synth"/>
</dbReference>
<dbReference type="InterPro" id="IPR020058">
    <property type="entry name" value="Glu/Gln-tRNA-synth_Ib_cat-dom"/>
</dbReference>
<dbReference type="InterPro" id="IPR049940">
    <property type="entry name" value="GluQ/Sye"/>
</dbReference>
<dbReference type="InterPro" id="IPR033910">
    <property type="entry name" value="GluRS_core"/>
</dbReference>
<dbReference type="InterPro" id="IPR014729">
    <property type="entry name" value="Rossmann-like_a/b/a_fold"/>
</dbReference>
<dbReference type="NCBIfam" id="TIGR00464">
    <property type="entry name" value="gltX_bact"/>
    <property type="match status" value="1"/>
</dbReference>
<dbReference type="PANTHER" id="PTHR43311">
    <property type="entry name" value="GLUTAMATE--TRNA LIGASE"/>
    <property type="match status" value="1"/>
</dbReference>
<dbReference type="PANTHER" id="PTHR43311:SF2">
    <property type="entry name" value="GLUTAMATE--TRNA LIGASE, MITOCHONDRIAL-RELATED"/>
    <property type="match status" value="1"/>
</dbReference>
<dbReference type="Pfam" id="PF19269">
    <property type="entry name" value="Anticodon_2"/>
    <property type="match status" value="1"/>
</dbReference>
<dbReference type="Pfam" id="PF00749">
    <property type="entry name" value="tRNA-synt_1c"/>
    <property type="match status" value="1"/>
</dbReference>
<dbReference type="PRINTS" id="PR00987">
    <property type="entry name" value="TRNASYNTHGLU"/>
</dbReference>
<dbReference type="SUPFAM" id="SSF48163">
    <property type="entry name" value="An anticodon-binding domain of class I aminoacyl-tRNA synthetases"/>
    <property type="match status" value="1"/>
</dbReference>
<dbReference type="SUPFAM" id="SSF52374">
    <property type="entry name" value="Nucleotidylyl transferase"/>
    <property type="match status" value="1"/>
</dbReference>
<dbReference type="PROSITE" id="PS00178">
    <property type="entry name" value="AA_TRNA_LIGASE_I"/>
    <property type="match status" value="1"/>
</dbReference>